<reference key="1">
    <citation type="journal article" date="2009" name="PLoS Biol.">
        <title>Lineage-specific biology revealed by a finished genome assembly of the mouse.</title>
        <authorList>
            <person name="Church D.M."/>
            <person name="Goodstadt L."/>
            <person name="Hillier L.W."/>
            <person name="Zody M.C."/>
            <person name="Goldstein S."/>
            <person name="She X."/>
            <person name="Bult C.J."/>
            <person name="Agarwala R."/>
            <person name="Cherry J.L."/>
            <person name="DiCuccio M."/>
            <person name="Hlavina W."/>
            <person name="Kapustin Y."/>
            <person name="Meric P."/>
            <person name="Maglott D."/>
            <person name="Birtle Z."/>
            <person name="Marques A.C."/>
            <person name="Graves T."/>
            <person name="Zhou S."/>
            <person name="Teague B."/>
            <person name="Potamousis K."/>
            <person name="Churas C."/>
            <person name="Place M."/>
            <person name="Herschleb J."/>
            <person name="Runnheim R."/>
            <person name="Forrest D."/>
            <person name="Amos-Landgraf J."/>
            <person name="Schwartz D.C."/>
            <person name="Cheng Z."/>
            <person name="Lindblad-Toh K."/>
            <person name="Eichler E.E."/>
            <person name="Ponting C.P."/>
        </authorList>
    </citation>
    <scope>NUCLEOTIDE SEQUENCE [LARGE SCALE GENOMIC DNA]</scope>
    <source>
        <strain>C57BL/6J</strain>
    </source>
</reference>
<reference key="2">
    <citation type="submission" date="2005-07" db="EMBL/GenBank/DDBJ databases">
        <authorList>
            <person name="Mural R.J."/>
            <person name="Adams M.D."/>
            <person name="Myers E.W."/>
            <person name="Smith H.O."/>
            <person name="Venter J.C."/>
        </authorList>
    </citation>
    <scope>NUCLEOTIDE SEQUENCE [LARGE SCALE GENOMIC DNA]</scope>
</reference>
<reference key="3">
    <citation type="journal article" date="2017" name="Front. Immunol.">
        <title>A mucosal and cutaneous chemokine ligand for the lymphocyte chemoattractant receptor GPR15.</title>
        <authorList>
            <person name="Ocon B."/>
            <person name="Pan J."/>
            <person name="Dinh T.T."/>
            <person name="Chen W."/>
            <person name="Ballet R."/>
            <person name="Bscheider M."/>
            <person name="Habtezion A."/>
            <person name="Tu H."/>
            <person name="Zabel B.A."/>
            <person name="Butcher E.C."/>
        </authorList>
    </citation>
    <scope>TISSUE SPECIFICITY</scope>
    <scope>FUNCTION</scope>
</reference>
<reference key="4">
    <citation type="journal article" date="2017" name="Sci. Signal.">
        <title>A natural ligand for the orphan receptor GPR15 modulates lymphocyte recruitment to epithelia.</title>
        <authorList>
            <person name="Suply T."/>
            <person name="Hannedouche S."/>
            <person name="Carte N."/>
            <person name="Li J."/>
            <person name="Grosshans B."/>
            <person name="Schaefer M."/>
            <person name="Raad L."/>
            <person name="Beck V."/>
            <person name="Vidal S."/>
            <person name="Hiou-Feige A."/>
            <person name="Beluch N."/>
            <person name="Barbieri S."/>
            <person name="Wirsching J."/>
            <person name="Lageyre N."/>
            <person name="Hillger F."/>
            <person name="Debon C."/>
            <person name="Dawson J."/>
            <person name="Smith P."/>
            <person name="Lannoy V."/>
            <person name="Detheux M."/>
            <person name="Bitsch F."/>
            <person name="Falchetto R."/>
            <person name="Bouwmeester T."/>
            <person name="Porter J."/>
            <person name="Baumgarten B."/>
            <person name="Mansfield K."/>
            <person name="Carballido J.M."/>
            <person name="Seuwen K."/>
            <person name="Bassilana F."/>
        </authorList>
    </citation>
    <scope>TISSUE SPECIFICITY</scope>
    <scope>INDUCTION BY IMIQUIMOD</scope>
    <scope>FUNCTION</scope>
</reference>
<reference key="5">
    <citation type="journal article" date="2018" name="Sci. Rep.">
        <title>C10orf99 contributes to the development of psoriasis by promoting the proliferation of keratinocytes.</title>
        <authorList>
            <person name="Chen C."/>
            <person name="Wu N."/>
            <person name="Duan Q."/>
            <person name="Yang H."/>
            <person name="Wang X."/>
            <person name="Yang P."/>
            <person name="Zhang M."/>
            <person name="Liu J."/>
            <person name="Liu Z."/>
            <person name="Shao Y."/>
            <person name="Zheng Y."/>
        </authorList>
    </citation>
    <scope>INDUCTION</scope>
</reference>
<reference key="6">
    <citation type="journal article" date="2022" name="Sci. Adv.">
        <title>GPR15L is an epithelial inflammation-derived pruritogen.</title>
        <authorList>
            <person name="Tseng P.Y."/>
            <person name="Hoon M.A."/>
        </authorList>
    </citation>
    <scope>INDUCTION</scope>
    <scope>DISRUPTION PHENOTYPE</scope>
    <scope>FUNCTION</scope>
</reference>
<evidence type="ECO:0000250" key="1">
    <source>
        <dbReference type="UniProtKB" id="I3LGZ3"/>
    </source>
</evidence>
<evidence type="ECO:0000250" key="2">
    <source>
        <dbReference type="UniProtKB" id="Q6UWK7"/>
    </source>
</evidence>
<evidence type="ECO:0000269" key="3">
    <source>
    </source>
</evidence>
<evidence type="ECO:0000269" key="4">
    <source>
    </source>
</evidence>
<evidence type="ECO:0000269" key="5">
    <source>
    </source>
</evidence>
<evidence type="ECO:0000269" key="6">
    <source>
    </source>
</evidence>
<evidence type="ECO:0000303" key="7">
    <source>
    </source>
</evidence>
<sequence length="78" mass="8899">MRLLALSGLLCMLLLCFCIFSSEGRRHPAKSLKLRRCCHLSPRSKLTTWKGNHTRPCRLCRNKLPVKSWVVPGALPQI</sequence>
<keyword id="KW-0044">Antibiotic</keyword>
<keyword id="KW-0929">Antimicrobial</keyword>
<keyword id="KW-0145">Chemotaxis</keyword>
<keyword id="KW-0202">Cytokine</keyword>
<keyword id="KW-1015">Disulfide bond</keyword>
<keyword id="KW-1185">Reference proteome</keyword>
<keyword id="KW-0964">Secreted</keyword>
<keyword id="KW-0732">Signal</keyword>
<organism>
    <name type="scientific">Mus musculus</name>
    <name type="common">Mouse</name>
    <dbReference type="NCBI Taxonomy" id="10090"/>
    <lineage>
        <taxon>Eukaryota</taxon>
        <taxon>Metazoa</taxon>
        <taxon>Chordata</taxon>
        <taxon>Craniata</taxon>
        <taxon>Vertebrata</taxon>
        <taxon>Euteleostomi</taxon>
        <taxon>Mammalia</taxon>
        <taxon>Eutheria</taxon>
        <taxon>Euarchontoglires</taxon>
        <taxon>Glires</taxon>
        <taxon>Rodentia</taxon>
        <taxon>Myomorpha</taxon>
        <taxon>Muroidea</taxon>
        <taxon>Muridae</taxon>
        <taxon>Murinae</taxon>
        <taxon>Mus</taxon>
        <taxon>Mus</taxon>
    </lineage>
</organism>
<accession>A0A0B4J1N3</accession>
<gene>
    <name type="primary">Gpr15lg</name>
    <name evidence="7" type="synonym">Gpr15l</name>
</gene>
<name>GP15L_MOUSE</name>
<protein>
    <recommendedName>
        <fullName>Protein GPR15LG</fullName>
    </recommendedName>
    <alternativeName>
        <fullName>Protein GPR15 ligand</fullName>
    </alternativeName>
    <alternativeName>
        <fullName evidence="7">Protein GPR15L</fullName>
    </alternativeName>
</protein>
<dbReference type="EMBL" id="CT009495">
    <property type="status" value="NOT_ANNOTATED_CDS"/>
    <property type="molecule type" value="Genomic_DNA"/>
</dbReference>
<dbReference type="EMBL" id="CH466573">
    <property type="protein sequence ID" value="EDL24898.1"/>
    <property type="molecule type" value="Genomic_DNA"/>
</dbReference>
<dbReference type="CCDS" id="CCDS56949.1"/>
<dbReference type="RefSeq" id="NP_001193613.1">
    <property type="nucleotide sequence ID" value="NM_001206684.1"/>
</dbReference>
<dbReference type="FunCoup" id="A0A0B4J1N3">
    <property type="interactions" value="112"/>
</dbReference>
<dbReference type="STRING" id="10090.ENSMUSP00000136426"/>
<dbReference type="PaxDb" id="10090-ENSMUSP00000136426"/>
<dbReference type="Antibodypedia" id="62671">
    <property type="antibodies" value="8 antibodies from 7 providers"/>
</dbReference>
<dbReference type="Ensembl" id="ENSMUST00000179488.3">
    <property type="protein sequence ID" value="ENSMUSP00000136426.2"/>
    <property type="gene ID" value="ENSMUSG00000096001.3"/>
</dbReference>
<dbReference type="GeneID" id="70045"/>
<dbReference type="KEGG" id="mmu:70045"/>
<dbReference type="AGR" id="MGI:1917295"/>
<dbReference type="CTD" id="387695"/>
<dbReference type="MGI" id="MGI:1917295">
    <property type="gene designation" value="Gpr15lg"/>
</dbReference>
<dbReference type="VEuPathDB" id="HostDB:ENSMUSG00000096001"/>
<dbReference type="eggNOG" id="ENOG502TD47">
    <property type="taxonomic scope" value="Eukaryota"/>
</dbReference>
<dbReference type="GeneTree" id="ENSGT00390000015172"/>
<dbReference type="HOGENOM" id="CLU_195436_0_0_1"/>
<dbReference type="InParanoid" id="A0A0B4J1N3"/>
<dbReference type="OMA" id="RARLCCH"/>
<dbReference type="OrthoDB" id="9627112at2759"/>
<dbReference type="BioGRID-ORCS" id="70045">
    <property type="hits" value="4 hits in 78 CRISPR screens"/>
</dbReference>
<dbReference type="PRO" id="PR:A0A0B4J1N3"/>
<dbReference type="Proteomes" id="UP000000589">
    <property type="component" value="Chromosome 14"/>
</dbReference>
<dbReference type="RNAct" id="A0A0B4J1N3">
    <property type="molecule type" value="protein"/>
</dbReference>
<dbReference type="Bgee" id="ENSMUSG00000096001">
    <property type="expression patterns" value="Expressed in right colon and 89 other cell types or tissues"/>
</dbReference>
<dbReference type="GO" id="GO:0005615">
    <property type="term" value="C:extracellular space"/>
    <property type="evidence" value="ECO:0007669"/>
    <property type="project" value="UniProtKB-KW"/>
</dbReference>
<dbReference type="GO" id="GO:0008009">
    <property type="term" value="F:chemokine activity"/>
    <property type="evidence" value="ECO:0000314"/>
    <property type="project" value="UniProtKB"/>
</dbReference>
<dbReference type="GO" id="GO:0001664">
    <property type="term" value="F:G protein-coupled receptor binding"/>
    <property type="evidence" value="ECO:0000250"/>
    <property type="project" value="UniProtKB"/>
</dbReference>
<dbReference type="GO" id="GO:0048018">
    <property type="term" value="F:receptor ligand activity"/>
    <property type="evidence" value="ECO:0000314"/>
    <property type="project" value="UniProtKB"/>
</dbReference>
<dbReference type="GO" id="GO:0050832">
    <property type="term" value="P:defense response to fungus"/>
    <property type="evidence" value="ECO:0007669"/>
    <property type="project" value="Ensembl"/>
</dbReference>
<dbReference type="GO" id="GO:0050830">
    <property type="term" value="P:defense response to Gram-positive bacterium"/>
    <property type="evidence" value="ECO:0007669"/>
    <property type="project" value="Ensembl"/>
</dbReference>
<dbReference type="GO" id="GO:0007186">
    <property type="term" value="P:G protein-coupled receptor signaling pathway"/>
    <property type="evidence" value="ECO:0000250"/>
    <property type="project" value="UniProtKB"/>
</dbReference>
<dbReference type="GO" id="GO:0048247">
    <property type="term" value="P:lymphocyte chemotaxis"/>
    <property type="evidence" value="ECO:0000314"/>
    <property type="project" value="UniProtKB"/>
</dbReference>
<dbReference type="GO" id="GO:0043303">
    <property type="term" value="P:mast cell degranulation"/>
    <property type="evidence" value="ECO:0000250"/>
    <property type="project" value="UniProtKB"/>
</dbReference>
<dbReference type="GO" id="GO:1902807">
    <property type="term" value="P:negative regulation of cell cycle G1/S phase transition"/>
    <property type="evidence" value="ECO:0007669"/>
    <property type="project" value="Ensembl"/>
</dbReference>
<dbReference type="GO" id="GO:0051782">
    <property type="term" value="P:negative regulation of cell division"/>
    <property type="evidence" value="ECO:0007669"/>
    <property type="project" value="Ensembl"/>
</dbReference>
<dbReference type="GO" id="GO:0010837">
    <property type="term" value="P:regulation of keratinocyte proliferation"/>
    <property type="evidence" value="ECO:0000250"/>
    <property type="project" value="UniProtKB"/>
</dbReference>
<dbReference type="GO" id="GO:2000404">
    <property type="term" value="P:regulation of T cell migration"/>
    <property type="evidence" value="ECO:0000250"/>
    <property type="project" value="UniProtKB"/>
</dbReference>
<dbReference type="GO" id="GO:0043029">
    <property type="term" value="P:T cell homeostasis"/>
    <property type="evidence" value="ECO:0007669"/>
    <property type="project" value="Ensembl"/>
</dbReference>
<dbReference type="InterPro" id="IPR031713">
    <property type="entry name" value="GPR15L"/>
</dbReference>
<dbReference type="Pfam" id="PF15854">
    <property type="entry name" value="GPR15L"/>
    <property type="match status" value="1"/>
</dbReference>
<proteinExistence type="evidence at transcript level"/>
<comment type="function">
    <text evidence="2 3 4 6">Highly cationic protein that has multiple functions. Acts as a chemotactic factor that mediates lymphocytes recruitment to epithelia through binding and activation of the G-protein coupled receptor GPR15 (PubMed:28900043, PubMed:28936214). May be a tumor suppressor; together with SUSD2 has a growth inhibitory effect on colon cancer cells which includes G1 cell cycle arrest (By similarity). May regulate keratinocyte proliferation. In addition, through activation of Mas-related G protein-coupled receptors (MRGPRs) contributes to pruritogenesis by activating itch-selective sensory neurons and mast cells degranulation (PubMed:35704588).</text>
</comment>
<comment type="function">
    <text evidence="2">Has antimicrobial activity against Gram-positive bacteria, including Staphylococcus aureus and Actinomyces spec., and Mycoplasma hominis and lentivirus.</text>
</comment>
<comment type="subunit">
    <text evidence="2">Interacts with SUSD2; the interaction is direct.</text>
</comment>
<comment type="subcellular location">
    <subcellularLocation>
        <location evidence="2">Secreted</location>
    </subcellularLocation>
</comment>
<comment type="tissue specificity">
    <text evidence="3 4">Highly abundant in the testis, colon, eye, and tongue. Detected in the epithelial layer of the colon, but not the small intestine.</text>
</comment>
<comment type="induction">
    <text evidence="3 5 6">Up-regulated by Imiquimod in the skin.</text>
</comment>
<comment type="disruption phenotype">
    <text evidence="6">Gpr15lg deficient mice in an imiquimod-induced psoriasiform dermatitis model develop less intense itch phenotype than wild type 1 day after imiquimod treatment and afterward, and display less severe capillary leakage and less skin hyperplasia after 5-day imiquimod treatment.</text>
</comment>
<feature type="signal peptide" evidence="2">
    <location>
        <begin position="1"/>
        <end position="24"/>
    </location>
</feature>
<feature type="chain" id="PRO_5010906477" description="Protein GPR15LG">
    <location>
        <begin position="25"/>
        <end position="78"/>
    </location>
</feature>
<feature type="disulfide bond" evidence="1">
    <location>
        <begin position="37"/>
        <end position="60"/>
    </location>
</feature>
<feature type="disulfide bond" evidence="1">
    <location>
        <begin position="38"/>
        <end position="57"/>
    </location>
</feature>